<keyword id="KW-0238">DNA-binding</keyword>
<keyword id="KW-0489">Methyltransferase</keyword>
<keyword id="KW-1185">Reference proteome</keyword>
<keyword id="KW-0680">Restriction system</keyword>
<keyword id="KW-0949">S-adenosyl-L-methionine</keyword>
<keyword id="KW-0808">Transferase</keyword>
<name>MTM2_METJA</name>
<proteinExistence type="evidence at protein level"/>
<feature type="chain" id="PRO_0000087937" description="Type II methyltransferase M.MjaII">
    <location>
        <begin position="1"/>
        <end position="530"/>
    </location>
</feature>
<gene>
    <name type="primary">mjaIIM</name>
    <name type="ordered locus">MJ1448</name>
</gene>
<reference key="1">
    <citation type="journal article" date="1996" name="Science">
        <title>Complete genome sequence of the methanogenic archaeon, Methanococcus jannaschii.</title>
        <authorList>
            <person name="Bult C.J."/>
            <person name="White O."/>
            <person name="Olsen G.J."/>
            <person name="Zhou L."/>
            <person name="Fleischmann R.D."/>
            <person name="Sutton G.G."/>
            <person name="Blake J.A."/>
            <person name="FitzGerald L.M."/>
            <person name="Clayton R.A."/>
            <person name="Gocayne J.D."/>
            <person name="Kerlavage A.R."/>
            <person name="Dougherty B.A."/>
            <person name="Tomb J.-F."/>
            <person name="Adams M.D."/>
            <person name="Reich C.I."/>
            <person name="Overbeek R."/>
            <person name="Kirkness E.F."/>
            <person name="Weinstock K.G."/>
            <person name="Merrick J.M."/>
            <person name="Glodek A."/>
            <person name="Scott J.L."/>
            <person name="Geoghagen N.S.M."/>
            <person name="Weidman J.F."/>
            <person name="Fuhrmann J.L."/>
            <person name="Nguyen D."/>
            <person name="Utterback T.R."/>
            <person name="Kelley J.M."/>
            <person name="Peterson J.D."/>
            <person name="Sadow P.W."/>
            <person name="Hanna M.C."/>
            <person name="Cotton M.D."/>
            <person name="Roberts K.M."/>
            <person name="Hurst M.A."/>
            <person name="Kaine B.P."/>
            <person name="Borodovsky M."/>
            <person name="Klenk H.-P."/>
            <person name="Fraser C.M."/>
            <person name="Smith H.O."/>
            <person name="Woese C.R."/>
            <person name="Venter J.C."/>
        </authorList>
    </citation>
    <scope>NUCLEOTIDE SEQUENCE [LARGE SCALE GENOMIC DNA]</scope>
    <source>
        <strain>ATCC 43067 / DSM 2661 / JAL-1 / JCM 10045 / NBRC 100440</strain>
    </source>
</reference>
<reference key="2">
    <citation type="patent" date="1999-03-11" number="WO9911821">
        <title>Method for screening restriction endonucleases.</title>
        <authorList>
            <person name="Noren C.J."/>
            <person name="Roberts R.J."/>
            <person name="Patti J."/>
            <person name="Byrd D.R."/>
            <person name="Morgan R.D."/>
        </authorList>
    </citation>
    <scope>CHARACTERIZATION</scope>
</reference>
<reference key="3">
    <citation type="journal article" date="2003" name="Nucleic Acids Res.">
        <title>A nomenclature for restriction enzymes, DNA methyltransferases, homing endonucleases and their genes.</title>
        <authorList>
            <person name="Roberts R.J."/>
            <person name="Belfort M."/>
            <person name="Bestor T."/>
            <person name="Bhagwat A.S."/>
            <person name="Bickle T.A."/>
            <person name="Bitinaite J."/>
            <person name="Blumenthal R.M."/>
            <person name="Degtyarev S.K."/>
            <person name="Dryden D.T."/>
            <person name="Dybvig K."/>
            <person name="Firman K."/>
            <person name="Gromova E.S."/>
            <person name="Gumport R.I."/>
            <person name="Halford S.E."/>
            <person name="Hattman S."/>
            <person name="Heitman J."/>
            <person name="Hornby D.P."/>
            <person name="Janulaitis A."/>
            <person name="Jeltsch A."/>
            <person name="Josephsen J."/>
            <person name="Kiss A."/>
            <person name="Klaenhammer T.R."/>
            <person name="Kobayashi I."/>
            <person name="Kong H."/>
            <person name="Krueger D.H."/>
            <person name="Lacks S."/>
            <person name="Marinus M.G."/>
            <person name="Miyahara M."/>
            <person name="Morgan R.D."/>
            <person name="Murray N.E."/>
            <person name="Nagaraja V."/>
            <person name="Piekarowicz A."/>
            <person name="Pingoud A."/>
            <person name="Raleigh E."/>
            <person name="Rao D.N."/>
            <person name="Reich N."/>
            <person name="Repin V.E."/>
            <person name="Selker E.U."/>
            <person name="Shaw P.C."/>
            <person name="Stein D.C."/>
            <person name="Stoddard B.L."/>
            <person name="Szybalski W."/>
            <person name="Trautner T.A."/>
            <person name="Van Etten J.L."/>
            <person name="Vitor J.M."/>
            <person name="Wilson G.G."/>
            <person name="Xu S.Y."/>
        </authorList>
    </citation>
    <scope>NOMENCLATURE</scope>
    <scope>SUBTYPE</scope>
</reference>
<sequence>MNLDAWLDIQPAKKLYTIKEASRILTKKFGKEIKEHNISYLVQYGRVNKYKIKNRVYVDIDEVENYYKKLFFEKRKEWEEKLGFKLDWDLAFDLLSEKERTKHVHGIHPYKGKFIPQLVEYFLKRHFNVGDIIIDPFMGSGTTLVQCMEMGINSIGIDISPFNCLIAEVKLQKYDIQKLKKILLDMLNKTKEFSKNLGDDEFVKEMDKLIEKYNKKYFTLEYKRKLSKKEIDEDSYSEKIMEMFYLEYKKLKEKYCKNDDEFDDIFKDKPFLYKWYSPRIRAELNFYLNLIKDCRDETIKKVAMIILSRTARSVRGTTHFDLATLKEPVFDPYYCYKHKKICRPVQTILRHLEEYTNDVISRIEEFSKIRKDAYYLIINGDSRTVDIEEELKKHPNFYELYKNKKIDGIFTSPPYLGQIDYHEQHAYAYELFDIPRLDELEIGPKFKGSSKKAQKEYIEGISDVLINMKRFLNEDAKIFIVVNDKKNLYKEIFEKSGLILVREFKRPVLNRTERDRNPYYESIFELKMEE</sequence>
<organism>
    <name type="scientific">Methanocaldococcus jannaschii (strain ATCC 43067 / DSM 2661 / JAL-1 / JCM 10045 / NBRC 100440)</name>
    <name type="common">Methanococcus jannaschii</name>
    <dbReference type="NCBI Taxonomy" id="243232"/>
    <lineage>
        <taxon>Archaea</taxon>
        <taxon>Methanobacteriati</taxon>
        <taxon>Methanobacteriota</taxon>
        <taxon>Methanomada group</taxon>
        <taxon>Methanococci</taxon>
        <taxon>Methanococcales</taxon>
        <taxon>Methanocaldococcaceae</taxon>
        <taxon>Methanocaldococcus</taxon>
    </lineage>
</organism>
<dbReference type="EC" id="2.1.1.113"/>
<dbReference type="EMBL" id="L77117">
    <property type="protein sequence ID" value="AAB99457.1"/>
    <property type="molecule type" value="Genomic_DNA"/>
</dbReference>
<dbReference type="PIR" id="G64480">
    <property type="entry name" value="G64480"/>
</dbReference>
<dbReference type="RefSeq" id="WP_010870968.1">
    <property type="nucleotide sequence ID" value="NC_000909.1"/>
</dbReference>
<dbReference type="STRING" id="243232.MJ_1448"/>
<dbReference type="REBASE" id="3896">
    <property type="entry name" value="M.MjaII"/>
</dbReference>
<dbReference type="PaxDb" id="243232-MJ_1448"/>
<dbReference type="EnsemblBacteria" id="AAB99457">
    <property type="protein sequence ID" value="AAB99457"/>
    <property type="gene ID" value="MJ_1448"/>
</dbReference>
<dbReference type="GeneID" id="1452352"/>
<dbReference type="KEGG" id="mja:MJ_1448"/>
<dbReference type="eggNOG" id="arCOG00890">
    <property type="taxonomic scope" value="Archaea"/>
</dbReference>
<dbReference type="HOGENOM" id="CLU_039482_0_0_2"/>
<dbReference type="InParanoid" id="Q58843"/>
<dbReference type="OrthoDB" id="38200at2157"/>
<dbReference type="PhylomeDB" id="Q58843"/>
<dbReference type="PRO" id="PR:Q58843"/>
<dbReference type="Proteomes" id="UP000000805">
    <property type="component" value="Chromosome"/>
</dbReference>
<dbReference type="GO" id="GO:0005737">
    <property type="term" value="C:cytoplasm"/>
    <property type="evidence" value="ECO:0000318"/>
    <property type="project" value="GO_Central"/>
</dbReference>
<dbReference type="GO" id="GO:0003677">
    <property type="term" value="F:DNA binding"/>
    <property type="evidence" value="ECO:0007669"/>
    <property type="project" value="UniProtKB-KW"/>
</dbReference>
<dbReference type="GO" id="GO:0008168">
    <property type="term" value="F:methyltransferase activity"/>
    <property type="evidence" value="ECO:0000318"/>
    <property type="project" value="GO_Central"/>
</dbReference>
<dbReference type="GO" id="GO:0008170">
    <property type="term" value="F:N-methyltransferase activity"/>
    <property type="evidence" value="ECO:0007669"/>
    <property type="project" value="InterPro"/>
</dbReference>
<dbReference type="GO" id="GO:0015667">
    <property type="term" value="F:site-specific DNA-methyltransferase (cytosine-N4-specific) activity"/>
    <property type="evidence" value="ECO:0007669"/>
    <property type="project" value="UniProtKB-EC"/>
</dbReference>
<dbReference type="GO" id="GO:0009307">
    <property type="term" value="P:DNA restriction-modification system"/>
    <property type="evidence" value="ECO:0007669"/>
    <property type="project" value="UniProtKB-KW"/>
</dbReference>
<dbReference type="GO" id="GO:0032259">
    <property type="term" value="P:methylation"/>
    <property type="evidence" value="ECO:0007669"/>
    <property type="project" value="UniProtKB-KW"/>
</dbReference>
<dbReference type="FunFam" id="3.40.50.150:FF:000908">
    <property type="entry name" value="Modification methylase MjaII"/>
    <property type="match status" value="1"/>
</dbReference>
<dbReference type="Gene3D" id="3.40.50.150">
    <property type="entry name" value="Vaccinia Virus protein VP39"/>
    <property type="match status" value="2"/>
</dbReference>
<dbReference type="InterPro" id="IPR002941">
    <property type="entry name" value="DNA_methylase_N4/N6"/>
</dbReference>
<dbReference type="InterPro" id="IPR017985">
    <property type="entry name" value="MeTrfase_CN4_CS"/>
</dbReference>
<dbReference type="InterPro" id="IPR001091">
    <property type="entry name" value="RM_Methyltransferase"/>
</dbReference>
<dbReference type="InterPro" id="IPR029063">
    <property type="entry name" value="SAM-dependent_MTases_sf"/>
</dbReference>
<dbReference type="Pfam" id="PF01555">
    <property type="entry name" value="N6_N4_Mtase"/>
    <property type="match status" value="2"/>
</dbReference>
<dbReference type="PRINTS" id="PR00508">
    <property type="entry name" value="S21N4MTFRASE"/>
</dbReference>
<dbReference type="SUPFAM" id="SSF53335">
    <property type="entry name" value="S-adenosyl-L-methionine-dependent methyltransferases"/>
    <property type="match status" value="2"/>
</dbReference>
<dbReference type="PROSITE" id="PS00093">
    <property type="entry name" value="N4_MTASE"/>
    <property type="match status" value="1"/>
</dbReference>
<accession>Q58843</accession>
<protein>
    <recommendedName>
        <fullName evidence="1">Type II methyltransferase M.MjaII</fullName>
        <shortName evidence="1">M.MjaII</shortName>
        <ecNumber>2.1.1.113</ecNumber>
    </recommendedName>
    <alternativeName>
        <fullName>N-4 cytosine-specific methyltransferase MjaII</fullName>
    </alternativeName>
</protein>
<comment type="function">
    <text evidence="1 3">An alpha subtype methylase that recognizes the double-stranded sequence 5'-GGNCC-3', methylates C-5 on both strands, and protects the DNA from cleavage by the MjaII endonuclease.</text>
</comment>
<comment type="catalytic activity">
    <reaction>
        <text>a 2'-deoxycytidine in DNA + S-adenosyl-L-methionine = an N(4)-methyl-2'-deoxycytidine in DNA + S-adenosyl-L-homocysteine + H(+)</text>
        <dbReference type="Rhea" id="RHEA:16857"/>
        <dbReference type="Rhea" id="RHEA-COMP:11369"/>
        <dbReference type="Rhea" id="RHEA-COMP:13674"/>
        <dbReference type="ChEBI" id="CHEBI:15378"/>
        <dbReference type="ChEBI" id="CHEBI:57856"/>
        <dbReference type="ChEBI" id="CHEBI:59789"/>
        <dbReference type="ChEBI" id="CHEBI:85452"/>
        <dbReference type="ChEBI" id="CHEBI:137933"/>
        <dbReference type="EC" id="2.1.1.113"/>
    </reaction>
</comment>
<comment type="similarity">
    <text evidence="2">Belongs to the N(4)/N(6)-methyltransferase family. N(4) subfamily.</text>
</comment>
<evidence type="ECO:0000303" key="1">
    <source>
    </source>
</evidence>
<evidence type="ECO:0000305" key="2"/>
<evidence type="ECO:0000305" key="3">
    <source ref="2"/>
</evidence>